<sequence>MAYNPRMSIIPTSQQNSRTRKKEEEADAFMRLPDREIVGCITDIGITFTVADLQKPNAAHVQQIFEWFAELLLNATRETVEPAMRAAAEDIAGEYADIIPSDTRNLMGFYVSLRRLLFECGITDFSFNDLYKPTYDRLVKIFSYLINFVRFRESQTAVIDQHYNKAESTKTRIETLYGENQENEGRLEDMKRNRKAMEAQVQQKTMRNEELKKRLLELRRNQERVAARLEEAKQKKGELTTALEQKTHEKVTLKQESTKLRPYVLQSASDLQENLAELRDILNNDKSHIDALDRRARALQTSTDSFSVVSTDVASCIKILDEIASELAKEEEELARNAKQRDALSERSNNAREVERTETMLKRQLSKWMERTEKLREQSNHKAHEAKEKMHELRAIHRQLTEEHTEKGKEMEVRRVRIEQTEKKMLDLKENIENEVHSAHEEYRKMEAHIKLYIAEMEQAIA</sequence>
<keyword id="KW-0131">Cell cycle</keyword>
<keyword id="KW-0132">Cell division</keyword>
<keyword id="KW-0137">Centromere</keyword>
<keyword id="KW-0158">Chromosome</keyword>
<keyword id="KW-0175">Coiled coil</keyword>
<keyword id="KW-0995">Kinetochore</keyword>
<keyword id="KW-0498">Mitosis</keyword>
<keyword id="KW-0539">Nucleus</keyword>
<keyword id="KW-1185">Reference proteome</keyword>
<dbReference type="EMBL" id="DS231665">
    <property type="protein sequence ID" value="ESU11223.1"/>
    <property type="molecule type" value="Genomic_DNA"/>
</dbReference>
<dbReference type="EMBL" id="HG970334">
    <property type="protein sequence ID" value="CEF86148.1"/>
    <property type="molecule type" value="Genomic_DNA"/>
</dbReference>
<dbReference type="RefSeq" id="XP_011323799.1">
    <property type="nucleotide sequence ID" value="XM_011325497.1"/>
</dbReference>
<dbReference type="SMR" id="Q4IBX0"/>
<dbReference type="FunCoup" id="Q4IBX0">
    <property type="interactions" value="277"/>
</dbReference>
<dbReference type="STRING" id="229533.Q4IBX0"/>
<dbReference type="GeneID" id="23552476"/>
<dbReference type="KEGG" id="fgr:FGSG_05288"/>
<dbReference type="VEuPathDB" id="FungiDB:FGRAMPH1_01G17537"/>
<dbReference type="eggNOG" id="KOG4438">
    <property type="taxonomic scope" value="Eukaryota"/>
</dbReference>
<dbReference type="HOGENOM" id="CLU_025461_2_1_1"/>
<dbReference type="InParanoid" id="Q4IBX0"/>
<dbReference type="OrthoDB" id="117875at110618"/>
<dbReference type="Proteomes" id="UP000070720">
    <property type="component" value="Chromosome 3"/>
</dbReference>
<dbReference type="GO" id="GO:0031262">
    <property type="term" value="C:Ndc80 complex"/>
    <property type="evidence" value="ECO:0000250"/>
    <property type="project" value="UniProtKB"/>
</dbReference>
<dbReference type="GO" id="GO:0005634">
    <property type="term" value="C:nucleus"/>
    <property type="evidence" value="ECO:0007669"/>
    <property type="project" value="UniProtKB-SubCell"/>
</dbReference>
<dbReference type="GO" id="GO:0008017">
    <property type="term" value="F:microtubule binding"/>
    <property type="evidence" value="ECO:0000250"/>
    <property type="project" value="UniProtKB"/>
</dbReference>
<dbReference type="GO" id="GO:0044877">
    <property type="term" value="F:protein-containing complex binding"/>
    <property type="evidence" value="ECO:0007669"/>
    <property type="project" value="TreeGrafter"/>
</dbReference>
<dbReference type="GO" id="GO:0051315">
    <property type="term" value="P:attachment of mitotic spindle microtubules to kinetochore"/>
    <property type="evidence" value="ECO:0007669"/>
    <property type="project" value="TreeGrafter"/>
</dbReference>
<dbReference type="GO" id="GO:0051301">
    <property type="term" value="P:cell division"/>
    <property type="evidence" value="ECO:0007669"/>
    <property type="project" value="UniProtKB-KW"/>
</dbReference>
<dbReference type="GO" id="GO:0051383">
    <property type="term" value="P:kinetochore organization"/>
    <property type="evidence" value="ECO:0007669"/>
    <property type="project" value="TreeGrafter"/>
</dbReference>
<dbReference type="GO" id="GO:0045132">
    <property type="term" value="P:meiotic chromosome segregation"/>
    <property type="evidence" value="ECO:0007669"/>
    <property type="project" value="TreeGrafter"/>
</dbReference>
<dbReference type="GO" id="GO:0007052">
    <property type="term" value="P:mitotic spindle organization"/>
    <property type="evidence" value="ECO:0007669"/>
    <property type="project" value="TreeGrafter"/>
</dbReference>
<dbReference type="FunFam" id="1.10.418.60:FF:000003">
    <property type="entry name" value="Probable kinetochore protein nuf2"/>
    <property type="match status" value="1"/>
</dbReference>
<dbReference type="Gene3D" id="1.10.418.60">
    <property type="entry name" value="Ncd80 complex, Nuf2 subunit"/>
    <property type="match status" value="1"/>
</dbReference>
<dbReference type="InterPro" id="IPR005549">
    <property type="entry name" value="Kinetochore_Nuf2_N"/>
</dbReference>
<dbReference type="InterPro" id="IPR041112">
    <property type="entry name" value="Nuf2_DHR10-like"/>
</dbReference>
<dbReference type="InterPro" id="IPR038275">
    <property type="entry name" value="Nuf2_N_sf"/>
</dbReference>
<dbReference type="PANTHER" id="PTHR21650:SF2">
    <property type="entry name" value="KINETOCHORE PROTEIN NUF2"/>
    <property type="match status" value="1"/>
</dbReference>
<dbReference type="PANTHER" id="PTHR21650">
    <property type="entry name" value="MEMBRALIN/KINETOCHORE PROTEIN NUF2"/>
    <property type="match status" value="1"/>
</dbReference>
<dbReference type="Pfam" id="PF03800">
    <property type="entry name" value="Nuf2"/>
    <property type="match status" value="1"/>
</dbReference>
<dbReference type="Pfam" id="PF18595">
    <property type="entry name" value="Nuf2_DHR10-like"/>
    <property type="match status" value="1"/>
</dbReference>
<proteinExistence type="inferred from homology"/>
<evidence type="ECO:0000250" key="1"/>
<evidence type="ECO:0000255" key="2"/>
<evidence type="ECO:0000256" key="3">
    <source>
        <dbReference type="SAM" id="MobiDB-lite"/>
    </source>
</evidence>
<evidence type="ECO:0000305" key="4"/>
<gene>
    <name type="primary">NUF2</name>
    <name type="ORF">FGRRES_05288</name>
    <name type="ORF">FGSG_05288</name>
</gene>
<name>NUF2_GIBZE</name>
<protein>
    <recommendedName>
        <fullName>Probable kinetochore protein NUF2</fullName>
    </recommendedName>
</protein>
<accession>Q4IBX0</accession>
<accession>A0A098DZ73</accession>
<accession>A0A0E0SI85</accession>
<accession>V6R9D0</accession>
<comment type="function">
    <text evidence="1">Acts as a component of the essential kinetochore-associated NDC80 complex, which is required for chromosome segregation and spindle checkpoint activity.</text>
</comment>
<comment type="subunit">
    <text evidence="1">Component of the NDC80 complex, which consists of NDC80, NUF2, SPC24 and SPC25.</text>
</comment>
<comment type="subcellular location">
    <subcellularLocation>
        <location evidence="1">Nucleus</location>
    </subcellularLocation>
    <subcellularLocation>
        <location evidence="1">Chromosome</location>
        <location evidence="1">Centromere</location>
        <location evidence="1">Kinetochore</location>
    </subcellularLocation>
    <text evidence="1">Associated with kinetochores.</text>
</comment>
<comment type="similarity">
    <text evidence="4">Belongs to the NUF2 family.</text>
</comment>
<feature type="chain" id="PRO_0000246653" description="Probable kinetochore protein NUF2">
    <location>
        <begin position="1"/>
        <end position="462"/>
    </location>
</feature>
<feature type="region of interest" description="Disordered" evidence="3">
    <location>
        <begin position="1"/>
        <end position="21"/>
    </location>
</feature>
<feature type="region of interest" description="Disordered" evidence="3">
    <location>
        <begin position="337"/>
        <end position="358"/>
    </location>
</feature>
<feature type="coiled-coil region" evidence="2">
    <location>
        <begin position="172"/>
        <end position="462"/>
    </location>
</feature>
<organism>
    <name type="scientific">Gibberella zeae (strain ATCC MYA-4620 / CBS 123657 / FGSC 9075 / NRRL 31084 / PH-1)</name>
    <name type="common">Wheat head blight fungus</name>
    <name type="synonym">Fusarium graminearum</name>
    <dbReference type="NCBI Taxonomy" id="229533"/>
    <lineage>
        <taxon>Eukaryota</taxon>
        <taxon>Fungi</taxon>
        <taxon>Dikarya</taxon>
        <taxon>Ascomycota</taxon>
        <taxon>Pezizomycotina</taxon>
        <taxon>Sordariomycetes</taxon>
        <taxon>Hypocreomycetidae</taxon>
        <taxon>Hypocreales</taxon>
        <taxon>Nectriaceae</taxon>
        <taxon>Fusarium</taxon>
    </lineage>
</organism>
<reference key="1">
    <citation type="journal article" date="2007" name="Science">
        <title>The Fusarium graminearum genome reveals a link between localized polymorphism and pathogen specialization.</title>
        <authorList>
            <person name="Cuomo C.A."/>
            <person name="Gueldener U."/>
            <person name="Xu J.-R."/>
            <person name="Trail F."/>
            <person name="Turgeon B.G."/>
            <person name="Di Pietro A."/>
            <person name="Walton J.D."/>
            <person name="Ma L.-J."/>
            <person name="Baker S.E."/>
            <person name="Rep M."/>
            <person name="Adam G."/>
            <person name="Antoniw J."/>
            <person name="Baldwin T."/>
            <person name="Calvo S.E."/>
            <person name="Chang Y.-L."/>
            <person name="DeCaprio D."/>
            <person name="Gale L.R."/>
            <person name="Gnerre S."/>
            <person name="Goswami R.S."/>
            <person name="Hammond-Kosack K."/>
            <person name="Harris L.J."/>
            <person name="Hilburn K."/>
            <person name="Kennell J.C."/>
            <person name="Kroken S."/>
            <person name="Magnuson J.K."/>
            <person name="Mannhaupt G."/>
            <person name="Mauceli E.W."/>
            <person name="Mewes H.-W."/>
            <person name="Mitterbauer R."/>
            <person name="Muehlbauer G."/>
            <person name="Muensterkoetter M."/>
            <person name="Nelson D."/>
            <person name="O'Donnell K."/>
            <person name="Ouellet T."/>
            <person name="Qi W."/>
            <person name="Quesneville H."/>
            <person name="Roncero M.I.G."/>
            <person name="Seong K.-Y."/>
            <person name="Tetko I.V."/>
            <person name="Urban M."/>
            <person name="Waalwijk C."/>
            <person name="Ward T.J."/>
            <person name="Yao J."/>
            <person name="Birren B.W."/>
            <person name="Kistler H.C."/>
        </authorList>
    </citation>
    <scope>NUCLEOTIDE SEQUENCE [LARGE SCALE GENOMIC DNA]</scope>
    <source>
        <strain>ATCC MYA-4620 / CBS 123657 / FGSC 9075 / NRRL 31084 / PH-1</strain>
    </source>
</reference>
<reference key="2">
    <citation type="journal article" date="2010" name="Nature">
        <title>Comparative genomics reveals mobile pathogenicity chromosomes in Fusarium.</title>
        <authorList>
            <person name="Ma L.-J."/>
            <person name="van der Does H.C."/>
            <person name="Borkovich K.A."/>
            <person name="Coleman J.J."/>
            <person name="Daboussi M.-J."/>
            <person name="Di Pietro A."/>
            <person name="Dufresne M."/>
            <person name="Freitag M."/>
            <person name="Grabherr M."/>
            <person name="Henrissat B."/>
            <person name="Houterman P.M."/>
            <person name="Kang S."/>
            <person name="Shim W.-B."/>
            <person name="Woloshuk C."/>
            <person name="Xie X."/>
            <person name="Xu J.-R."/>
            <person name="Antoniw J."/>
            <person name="Baker S.E."/>
            <person name="Bluhm B.H."/>
            <person name="Breakspear A."/>
            <person name="Brown D.W."/>
            <person name="Butchko R.A.E."/>
            <person name="Chapman S."/>
            <person name="Coulson R."/>
            <person name="Coutinho P.M."/>
            <person name="Danchin E.G.J."/>
            <person name="Diener A."/>
            <person name="Gale L.R."/>
            <person name="Gardiner D.M."/>
            <person name="Goff S."/>
            <person name="Hammond-Kosack K.E."/>
            <person name="Hilburn K."/>
            <person name="Hua-Van A."/>
            <person name="Jonkers W."/>
            <person name="Kazan K."/>
            <person name="Kodira C.D."/>
            <person name="Koehrsen M."/>
            <person name="Kumar L."/>
            <person name="Lee Y.-H."/>
            <person name="Li L."/>
            <person name="Manners J.M."/>
            <person name="Miranda-Saavedra D."/>
            <person name="Mukherjee M."/>
            <person name="Park G."/>
            <person name="Park J."/>
            <person name="Park S.-Y."/>
            <person name="Proctor R.H."/>
            <person name="Regev A."/>
            <person name="Ruiz-Roldan M.C."/>
            <person name="Sain D."/>
            <person name="Sakthikumar S."/>
            <person name="Sykes S."/>
            <person name="Schwartz D.C."/>
            <person name="Turgeon B.G."/>
            <person name="Wapinski I."/>
            <person name="Yoder O."/>
            <person name="Young S."/>
            <person name="Zeng Q."/>
            <person name="Zhou S."/>
            <person name="Galagan J."/>
            <person name="Cuomo C.A."/>
            <person name="Kistler H.C."/>
            <person name="Rep M."/>
        </authorList>
    </citation>
    <scope>GENOME REANNOTATION</scope>
    <source>
        <strain>ATCC MYA-4620 / CBS 123657 / FGSC 9075 / NRRL 31084 / PH-1</strain>
    </source>
</reference>
<reference key="3">
    <citation type="journal article" date="2015" name="BMC Genomics">
        <title>The completed genome sequence of the pathogenic ascomycete fungus Fusarium graminearum.</title>
        <authorList>
            <person name="King R."/>
            <person name="Urban M."/>
            <person name="Hammond-Kosack M.C.U."/>
            <person name="Hassani-Pak K."/>
            <person name="Hammond-Kosack K.E."/>
        </authorList>
    </citation>
    <scope>NUCLEOTIDE SEQUENCE [LARGE SCALE GENOMIC DNA]</scope>
    <source>
        <strain>ATCC MYA-4620 / CBS 123657 / FGSC 9075 / NRRL 31084 / PH-1</strain>
    </source>
</reference>